<name>VP02_BPAPS</name>
<evidence type="ECO:0000255" key="1">
    <source>
        <dbReference type="PROSITE-ProRule" id="PRU00257"/>
    </source>
</evidence>
<reference key="1">
    <citation type="journal article" date="1999" name="Virology">
        <title>Isolation and characterization of APSE-1, a bacteriophage infecting the secondary endosymbiont of acyrthosiphon pisum.</title>
        <authorList>
            <person name="van der Wilk F."/>
            <person name="Dullemans A.M."/>
            <person name="Verbeek M."/>
            <person name="van den Heuvel J.F.J.M."/>
        </authorList>
    </citation>
    <scope>NUCLEOTIDE SEQUENCE [LARGE SCALE GENOMIC DNA]</scope>
</reference>
<protein>
    <recommendedName>
        <fullName>Putative protein P2</fullName>
    </recommendedName>
</protein>
<gene>
    <name type="primary">2</name>
</gene>
<organismHost>
    <name type="scientific">Escherichia coli</name>
    <dbReference type="NCBI Taxonomy" id="562"/>
</organismHost>
<accession>Q9T1U6</accession>
<dbReference type="EMBL" id="AF157835">
    <property type="protein sequence ID" value="AAF03947.1"/>
    <property type="molecule type" value="Genomic_DNA"/>
</dbReference>
<dbReference type="RefSeq" id="NP_050963.1">
    <property type="nucleotide sequence ID" value="NC_000935.1"/>
</dbReference>
<dbReference type="SMR" id="Q9T1U6"/>
<dbReference type="KEGG" id="vg:1262295"/>
<dbReference type="Proteomes" id="UP000000853">
    <property type="component" value="Genome"/>
</dbReference>
<dbReference type="GO" id="GO:0003677">
    <property type="term" value="F:DNA binding"/>
    <property type="evidence" value="ECO:0007669"/>
    <property type="project" value="UniProtKB-KW"/>
</dbReference>
<dbReference type="CDD" id="cd00093">
    <property type="entry name" value="HTH_XRE"/>
    <property type="match status" value="1"/>
</dbReference>
<dbReference type="Gene3D" id="1.10.260.40">
    <property type="entry name" value="lambda repressor-like DNA-binding domains"/>
    <property type="match status" value="1"/>
</dbReference>
<dbReference type="InterPro" id="IPR001387">
    <property type="entry name" value="Cro/C1-type_HTH"/>
</dbReference>
<dbReference type="InterPro" id="IPR010982">
    <property type="entry name" value="Lambda_DNA-bd_dom_sf"/>
</dbReference>
<dbReference type="Pfam" id="PF01381">
    <property type="entry name" value="HTH_3"/>
    <property type="match status" value="1"/>
</dbReference>
<dbReference type="SMART" id="SM00530">
    <property type="entry name" value="HTH_XRE"/>
    <property type="match status" value="1"/>
</dbReference>
<dbReference type="SUPFAM" id="SSF47413">
    <property type="entry name" value="lambda repressor-like DNA-binding domains"/>
    <property type="match status" value="1"/>
</dbReference>
<dbReference type="PROSITE" id="PS50943">
    <property type="entry name" value="HTH_CROC1"/>
    <property type="match status" value="1"/>
</dbReference>
<organism>
    <name type="scientific">Acyrthosiphon pisum secondary endosymbiont phage 1</name>
    <name type="common">Bacteriophage APSE-1</name>
    <dbReference type="NCBI Taxonomy" id="2682836"/>
    <lineage>
        <taxon>Viruses</taxon>
        <taxon>Duplodnaviria</taxon>
        <taxon>Heunggongvirae</taxon>
        <taxon>Uroviricota</taxon>
        <taxon>Caudoviricetes</taxon>
        <taxon>Sendosyvirus</taxon>
        <taxon>Sendosyvirus APSE1</taxon>
    </lineage>
</organism>
<keyword id="KW-0238">DNA-binding</keyword>
<keyword id="KW-1185">Reference proteome</keyword>
<keyword id="KW-0804">Transcription</keyword>
<keyword id="KW-0805">Transcription regulation</keyword>
<sequence length="94" mass="10647">MRIGIFKHLKEMNNWRKTVYKKSPIEIVQALLAQGLTQSEIEANTGIKQPSISRILTGKNKDPRISTMVALEKLYLELATNSFSTSRLNKSKAK</sequence>
<proteinExistence type="predicted"/>
<feature type="chain" id="PRO_0000149720" description="Putative protein P2">
    <location>
        <begin position="1"/>
        <end position="94"/>
    </location>
</feature>
<feature type="domain" description="HTH cro/C1-type" evidence="1">
    <location>
        <begin position="27"/>
        <end position="88"/>
    </location>
</feature>
<feature type="DNA-binding region" description="H-T-H motif" evidence="1">
    <location>
        <begin position="38"/>
        <end position="57"/>
    </location>
</feature>